<comment type="function">
    <text evidence="1">Involved in protein export. Acts as a chaperone by maintaining the newly synthesized protein in an open conformation. Functions as a peptidyl-prolyl cis-trans isomerase.</text>
</comment>
<comment type="catalytic activity">
    <reaction evidence="1">
        <text>[protein]-peptidylproline (omega=180) = [protein]-peptidylproline (omega=0)</text>
        <dbReference type="Rhea" id="RHEA:16237"/>
        <dbReference type="Rhea" id="RHEA-COMP:10747"/>
        <dbReference type="Rhea" id="RHEA-COMP:10748"/>
        <dbReference type="ChEBI" id="CHEBI:83833"/>
        <dbReference type="ChEBI" id="CHEBI:83834"/>
        <dbReference type="EC" id="5.2.1.8"/>
    </reaction>
</comment>
<comment type="subcellular location">
    <subcellularLocation>
        <location>Cytoplasm</location>
    </subcellularLocation>
    <text evidence="1">About half TF is bound to the ribosome near the polypeptide exit tunnel while the other half is free in the cytoplasm.</text>
</comment>
<comment type="domain">
    <text evidence="1">Consists of 3 domains; the N-terminus binds the ribosome, the middle domain has PPIase activity, while the C-terminus has intrinsic chaperone activity on its own.</text>
</comment>
<comment type="similarity">
    <text evidence="1">Belongs to the FKBP-type PPIase family. Tig subfamily.</text>
</comment>
<proteinExistence type="inferred from homology"/>
<gene>
    <name evidence="1" type="primary">tig</name>
    <name type="ordered locus">VV1_0024</name>
</gene>
<sequence>MQVTVETLEGLERRLNITVPAANIEDAVTAELRNIAKNRRFDGFRKGKVPMKMVAKMYGKAVRQDILGEVMQRHFIEAIIKEKINPAGAPTFAPVENKEGSDLVFNATFEVYPEVELKGLENITVEKPAVEVKDADVEEMIETLRKQQATWTEVEEAAEAGKRVSIDFVGSIDGEEFEGGKAENFPLEMGAGRMIPGFEDGIEGKTKGMEFEIDVTFPEDYHAENLKGKAAKFAIKVNKVEARQLPELNDEFVAKFGVAEGGIDALKAEVRKNMERELKQAVKNRIKEQAIDGLVKENEIDVPAALIDQEINVLRQQAAQRFGGNVEAAMQLPRELFEEQAKRRVVVGLLLGEVIKAHELKVDEEKVKAIITEMATAYEDPTEVVTYYEQNEQLMNNMRNVALEEQAIDAIIAKAQVSEKEVSFNELMNQPA</sequence>
<keyword id="KW-0131">Cell cycle</keyword>
<keyword id="KW-0132">Cell division</keyword>
<keyword id="KW-0143">Chaperone</keyword>
<keyword id="KW-0963">Cytoplasm</keyword>
<keyword id="KW-0413">Isomerase</keyword>
<keyword id="KW-0697">Rotamase</keyword>
<accession>Q8DG25</accession>
<evidence type="ECO:0000255" key="1">
    <source>
        <dbReference type="HAMAP-Rule" id="MF_00303"/>
    </source>
</evidence>
<dbReference type="EC" id="5.2.1.8" evidence="1"/>
<dbReference type="EMBL" id="AE016795">
    <property type="protein sequence ID" value="AAO08568.1"/>
    <property type="molecule type" value="Genomic_DNA"/>
</dbReference>
<dbReference type="RefSeq" id="WP_011078150.1">
    <property type="nucleotide sequence ID" value="NC_004459.3"/>
</dbReference>
<dbReference type="SMR" id="Q8DG25"/>
<dbReference type="KEGG" id="vvu:VV1_0024"/>
<dbReference type="HOGENOM" id="CLU_033058_2_0_6"/>
<dbReference type="Proteomes" id="UP000002275">
    <property type="component" value="Chromosome 1"/>
</dbReference>
<dbReference type="GO" id="GO:0005737">
    <property type="term" value="C:cytoplasm"/>
    <property type="evidence" value="ECO:0007669"/>
    <property type="project" value="UniProtKB-SubCell"/>
</dbReference>
<dbReference type="GO" id="GO:0003755">
    <property type="term" value="F:peptidyl-prolyl cis-trans isomerase activity"/>
    <property type="evidence" value="ECO:0007669"/>
    <property type="project" value="UniProtKB-UniRule"/>
</dbReference>
<dbReference type="GO" id="GO:0044183">
    <property type="term" value="F:protein folding chaperone"/>
    <property type="evidence" value="ECO:0007669"/>
    <property type="project" value="TreeGrafter"/>
</dbReference>
<dbReference type="GO" id="GO:0043022">
    <property type="term" value="F:ribosome binding"/>
    <property type="evidence" value="ECO:0007669"/>
    <property type="project" value="TreeGrafter"/>
</dbReference>
<dbReference type="GO" id="GO:0051083">
    <property type="term" value="P:'de novo' cotranslational protein folding"/>
    <property type="evidence" value="ECO:0007669"/>
    <property type="project" value="TreeGrafter"/>
</dbReference>
<dbReference type="GO" id="GO:0051301">
    <property type="term" value="P:cell division"/>
    <property type="evidence" value="ECO:0007669"/>
    <property type="project" value="UniProtKB-KW"/>
</dbReference>
<dbReference type="GO" id="GO:0061077">
    <property type="term" value="P:chaperone-mediated protein folding"/>
    <property type="evidence" value="ECO:0007669"/>
    <property type="project" value="TreeGrafter"/>
</dbReference>
<dbReference type="GO" id="GO:0015031">
    <property type="term" value="P:protein transport"/>
    <property type="evidence" value="ECO:0007669"/>
    <property type="project" value="UniProtKB-UniRule"/>
</dbReference>
<dbReference type="GO" id="GO:0043335">
    <property type="term" value="P:protein unfolding"/>
    <property type="evidence" value="ECO:0007669"/>
    <property type="project" value="TreeGrafter"/>
</dbReference>
<dbReference type="FunFam" id="3.10.50.40:FF:000001">
    <property type="entry name" value="Trigger factor"/>
    <property type="match status" value="1"/>
</dbReference>
<dbReference type="FunFam" id="3.30.70.1050:FF:000001">
    <property type="entry name" value="Trigger factor"/>
    <property type="match status" value="1"/>
</dbReference>
<dbReference type="Gene3D" id="3.10.50.40">
    <property type="match status" value="1"/>
</dbReference>
<dbReference type="Gene3D" id="3.30.70.1050">
    <property type="entry name" value="Trigger factor ribosome-binding domain"/>
    <property type="match status" value="1"/>
</dbReference>
<dbReference type="Gene3D" id="1.10.3120.10">
    <property type="entry name" value="Trigger factor, C-terminal domain"/>
    <property type="match status" value="1"/>
</dbReference>
<dbReference type="HAMAP" id="MF_00303">
    <property type="entry name" value="Trigger_factor_Tig"/>
    <property type="match status" value="1"/>
</dbReference>
<dbReference type="InterPro" id="IPR046357">
    <property type="entry name" value="PPIase_dom_sf"/>
</dbReference>
<dbReference type="InterPro" id="IPR001179">
    <property type="entry name" value="PPIase_FKBP_dom"/>
</dbReference>
<dbReference type="InterPro" id="IPR005215">
    <property type="entry name" value="Trig_fac"/>
</dbReference>
<dbReference type="InterPro" id="IPR008880">
    <property type="entry name" value="Trigger_fac_C"/>
</dbReference>
<dbReference type="InterPro" id="IPR037041">
    <property type="entry name" value="Trigger_fac_C_sf"/>
</dbReference>
<dbReference type="InterPro" id="IPR008881">
    <property type="entry name" value="Trigger_fac_ribosome-bd_bac"/>
</dbReference>
<dbReference type="InterPro" id="IPR036611">
    <property type="entry name" value="Trigger_fac_ribosome-bd_sf"/>
</dbReference>
<dbReference type="InterPro" id="IPR027304">
    <property type="entry name" value="Trigger_fact/SurA_dom_sf"/>
</dbReference>
<dbReference type="NCBIfam" id="TIGR00115">
    <property type="entry name" value="tig"/>
    <property type="match status" value="1"/>
</dbReference>
<dbReference type="PANTHER" id="PTHR30560">
    <property type="entry name" value="TRIGGER FACTOR CHAPERONE AND PEPTIDYL-PROLYL CIS/TRANS ISOMERASE"/>
    <property type="match status" value="1"/>
</dbReference>
<dbReference type="PANTHER" id="PTHR30560:SF3">
    <property type="entry name" value="TRIGGER FACTOR-LIKE PROTEIN TIG, CHLOROPLASTIC"/>
    <property type="match status" value="1"/>
</dbReference>
<dbReference type="Pfam" id="PF00254">
    <property type="entry name" value="FKBP_C"/>
    <property type="match status" value="1"/>
</dbReference>
<dbReference type="Pfam" id="PF05698">
    <property type="entry name" value="Trigger_C"/>
    <property type="match status" value="1"/>
</dbReference>
<dbReference type="Pfam" id="PF05697">
    <property type="entry name" value="Trigger_N"/>
    <property type="match status" value="1"/>
</dbReference>
<dbReference type="PIRSF" id="PIRSF003095">
    <property type="entry name" value="Trigger_factor"/>
    <property type="match status" value="1"/>
</dbReference>
<dbReference type="SUPFAM" id="SSF54534">
    <property type="entry name" value="FKBP-like"/>
    <property type="match status" value="1"/>
</dbReference>
<dbReference type="SUPFAM" id="SSF109998">
    <property type="entry name" value="Triger factor/SurA peptide-binding domain-like"/>
    <property type="match status" value="1"/>
</dbReference>
<dbReference type="SUPFAM" id="SSF102735">
    <property type="entry name" value="Trigger factor ribosome-binding domain"/>
    <property type="match status" value="1"/>
</dbReference>
<dbReference type="PROSITE" id="PS50059">
    <property type="entry name" value="FKBP_PPIASE"/>
    <property type="match status" value="1"/>
</dbReference>
<organism>
    <name type="scientific">Vibrio vulnificus (strain CMCP6)</name>
    <dbReference type="NCBI Taxonomy" id="216895"/>
    <lineage>
        <taxon>Bacteria</taxon>
        <taxon>Pseudomonadati</taxon>
        <taxon>Pseudomonadota</taxon>
        <taxon>Gammaproteobacteria</taxon>
        <taxon>Vibrionales</taxon>
        <taxon>Vibrionaceae</taxon>
        <taxon>Vibrio</taxon>
    </lineage>
</organism>
<reference key="1">
    <citation type="submission" date="2002-12" db="EMBL/GenBank/DDBJ databases">
        <title>Complete genome sequence of Vibrio vulnificus CMCP6.</title>
        <authorList>
            <person name="Rhee J.H."/>
            <person name="Kim S.Y."/>
            <person name="Chung S.S."/>
            <person name="Kim J.J."/>
            <person name="Moon Y.H."/>
            <person name="Jeong H."/>
            <person name="Choy H.E."/>
        </authorList>
    </citation>
    <scope>NUCLEOTIDE SEQUENCE [LARGE SCALE GENOMIC DNA]</scope>
    <source>
        <strain>CMCP6</strain>
    </source>
</reference>
<protein>
    <recommendedName>
        <fullName evidence="1">Trigger factor</fullName>
        <shortName evidence="1">TF</shortName>
        <ecNumber evidence="1">5.2.1.8</ecNumber>
    </recommendedName>
    <alternativeName>
        <fullName evidence="1">PPIase</fullName>
    </alternativeName>
</protein>
<feature type="chain" id="PRO_0000179460" description="Trigger factor">
    <location>
        <begin position="1"/>
        <end position="432"/>
    </location>
</feature>
<feature type="domain" description="PPIase FKBP-type" evidence="1">
    <location>
        <begin position="161"/>
        <end position="246"/>
    </location>
</feature>
<name>TIG_VIBVU</name>